<feature type="initiator methionine" description="Removed" evidence="5">
    <location>
        <position position="1"/>
    </location>
</feature>
<feature type="chain" id="PRO_0000108209" description="Cytochrome c">
    <location>
        <begin position="2"/>
        <end position="105"/>
    </location>
</feature>
<feature type="binding site" description="covalent">
    <location>
        <position position="15"/>
    </location>
    <ligand>
        <name>heme c</name>
        <dbReference type="ChEBI" id="CHEBI:61717"/>
    </ligand>
</feature>
<feature type="binding site" description="covalent">
    <location>
        <position position="18"/>
    </location>
    <ligand>
        <name>heme c</name>
        <dbReference type="ChEBI" id="CHEBI:61717"/>
    </ligand>
</feature>
<feature type="binding site" description="axial binding residue">
    <location>
        <position position="19"/>
    </location>
    <ligand>
        <name>heme c</name>
        <dbReference type="ChEBI" id="CHEBI:61717"/>
    </ligand>
    <ligandPart>
        <name>Fe</name>
        <dbReference type="ChEBI" id="CHEBI:18248"/>
    </ligandPart>
</feature>
<feature type="binding site" description="axial binding residue">
    <location>
        <position position="81"/>
    </location>
    <ligand>
        <name>heme c</name>
        <dbReference type="ChEBI" id="CHEBI:61717"/>
    </ligand>
    <ligandPart>
        <name>Fe</name>
        <dbReference type="ChEBI" id="CHEBI:18248"/>
    </ligandPart>
</feature>
<feature type="modified residue" description="N-acetylglycine" evidence="5">
    <location>
        <position position="2"/>
    </location>
</feature>
<feature type="modified residue" description="Phosphotyrosine" evidence="3">
    <location>
        <position position="49"/>
    </location>
</feature>
<feature type="modified residue" description="N6-succinyllysine" evidence="2">
    <location>
        <position position="56"/>
    </location>
</feature>
<feature type="modified residue" description="N6-acetyllysine; alternate" evidence="2">
    <location>
        <position position="73"/>
    </location>
</feature>
<feature type="modified residue" description="N6-succinyllysine; alternate" evidence="2">
    <location>
        <position position="73"/>
    </location>
</feature>
<feature type="modified residue" description="Phosphotyrosine" evidence="4">
    <location>
        <position position="98"/>
    </location>
</feature>
<feature type="modified residue" description="N6-acetyllysine" evidence="2">
    <location>
        <position position="100"/>
    </location>
</feature>
<feature type="helix" evidence="7">
    <location>
        <begin position="4"/>
        <end position="14"/>
    </location>
</feature>
<feature type="turn" evidence="7">
    <location>
        <begin position="15"/>
        <end position="18"/>
    </location>
</feature>
<feature type="helix" evidence="7">
    <location>
        <begin position="51"/>
        <end position="55"/>
    </location>
</feature>
<feature type="helix" evidence="7">
    <location>
        <begin position="62"/>
        <end position="68"/>
    </location>
</feature>
<feature type="helix" evidence="7">
    <location>
        <begin position="72"/>
        <end position="75"/>
    </location>
</feature>
<feature type="helix" evidence="7">
    <location>
        <begin position="89"/>
        <end position="102"/>
    </location>
</feature>
<gene>
    <name type="primary">CYCS</name>
    <name type="synonym">CYC</name>
</gene>
<organism>
    <name type="scientific">Bos taurus</name>
    <name type="common">Bovine</name>
    <dbReference type="NCBI Taxonomy" id="9913"/>
    <lineage>
        <taxon>Eukaryota</taxon>
        <taxon>Metazoa</taxon>
        <taxon>Chordata</taxon>
        <taxon>Craniata</taxon>
        <taxon>Vertebrata</taxon>
        <taxon>Euteleostomi</taxon>
        <taxon>Mammalia</taxon>
        <taxon>Eutheria</taxon>
        <taxon>Laurasiatheria</taxon>
        <taxon>Artiodactyla</taxon>
        <taxon>Ruminantia</taxon>
        <taxon>Pecora</taxon>
        <taxon>Bovidae</taxon>
        <taxon>Bovinae</taxon>
        <taxon>Bos</taxon>
    </lineage>
</organism>
<accession>P62894</accession>
<accession>P00006</accession>
<accession>Q2KJD4</accession>
<proteinExistence type="evidence at protein level"/>
<comment type="function">
    <text>Electron carrier protein. The oxidized form of the cytochrome c heme group can accept an electron from the heme group of the cytochrome c1 subunit of cytochrome reductase. Cytochrome c then transfers this electron to the cytochrome oxidase complex, the final protein carrier in the mitochondrial electron-transport chain.</text>
</comment>
<comment type="function">
    <text evidence="1">Plays a role in apoptosis. Suppression of the anti-apoptotic members or activation of the pro-apoptotic members of the Bcl-2 family leads to altered mitochondrial membrane permeability resulting in release of cytochrome c into the cytosol. Binding of cytochrome c to Apaf-1 triggers the activation of caspase-9, which then accelerates apoptosis by activating other caspases (By similarity).</text>
</comment>
<comment type="subcellular location">
    <subcellularLocation>
        <location>Mitochondrion intermembrane space</location>
    </subcellularLocation>
    <text>Loosely associated with the inner membrane.</text>
</comment>
<comment type="PTM">
    <text>Binds 1 heme c group covalently per subunit.</text>
</comment>
<comment type="PTM">
    <text evidence="3 4">Phosphorylation at Tyr-49 and Tyr-98 both reduce by half the turnover in the reaction with cytochrome c oxidase, down-regulating mitochondrial respiration.</text>
</comment>
<comment type="similarity">
    <text evidence="6">Belongs to the cytochrome c family.</text>
</comment>
<comment type="online information" name="Protein Spotlight">
    <link uri="https://www.proteinspotlight.org/back_issues/076"/>
    <text>Life shuttle - Issue 76 of November 2006</text>
</comment>
<reference key="1">
    <citation type="submission" date="2005-09" db="EMBL/GenBank/DDBJ databases">
        <authorList>
            <consortium name="NIH - Mammalian Gene Collection (MGC) project"/>
        </authorList>
    </citation>
    <scope>NUCLEOTIDE SEQUENCE [LARGE SCALE MRNA]</scope>
    <source>
        <strain>Hereford</strain>
        <tissue>Thymus</tissue>
    </source>
</reference>
<reference key="2">
    <citation type="journal article" date="1966" name="J. Biol. Chem.">
        <title>The amino acid sequence of bovine heart cytochrome c.</title>
        <authorList>
            <person name="Nakashima T."/>
            <person name="Higa H."/>
            <person name="Matsubara H."/>
            <person name="Benson A.M."/>
            <person name="Yasunobu K.T."/>
        </authorList>
    </citation>
    <scope>PROTEIN SEQUENCE OF 2-105</scope>
    <scope>ACETYLATION AT GLY-2</scope>
    <source>
        <tissue>Heart</tissue>
    </source>
</reference>
<reference key="3">
    <citation type="journal article" date="2006" name="Biochemistry">
        <title>New prospects for an old enzyme: mammalian cytochrome c is tyrosine-phosphorylated in vivo.</title>
        <authorList>
            <person name="Lee I."/>
            <person name="Salomon A.R."/>
            <person name="Yu K."/>
            <person name="Doan J.W."/>
            <person name="Grossman L.I."/>
            <person name="Huttemann M."/>
        </authorList>
    </citation>
    <scope>PHOSPHORYLATION AT TYR-49</scope>
    <source>
        <tissue>Heart</tissue>
    </source>
</reference>
<reference key="4">
    <citation type="journal article" date="2008" name="Biochim. Biophys. Acta">
        <title>Mammalian liver cytochrome c is tyrosine-48 phosphorylated in vivo, inhibiting mitochondrial respiration.</title>
        <authorList>
            <person name="Yu H."/>
            <person name="Lee I."/>
            <person name="Salomon A.R."/>
            <person name="Yu K."/>
            <person name="Huttemann M."/>
        </authorList>
    </citation>
    <scope>PHOSPHORYLATION AT TYR-98</scope>
    <source>
        <tissue>Liver</tissue>
    </source>
</reference>
<reference key="5">
    <citation type="journal article" date="2008" name="Proteins">
        <title>High resolution X-ray crystallographic structure of bovine heart cytochrome c and its application to the design of an electron transfer biosensor.</title>
        <authorList>
            <person name="Mirkin N."/>
            <person name="Jaconcic J."/>
            <person name="Stojanoff V."/>
            <person name="Moreno A."/>
        </authorList>
    </citation>
    <scope>X-RAY CRYSTALLOGRAPHY (1.5 ANGSTROMS) OF 2-105</scope>
    <scope>HEME-BINDING SITES</scope>
</reference>
<dbReference type="EMBL" id="BC105397">
    <property type="protein sequence ID" value="AAI05398.1"/>
    <property type="molecule type" value="mRNA"/>
</dbReference>
<dbReference type="PIR" id="A92022">
    <property type="entry name" value="CCBO"/>
</dbReference>
<dbReference type="RefSeq" id="NP_001039526.1">
    <property type="nucleotide sequence ID" value="NM_001046061.2"/>
</dbReference>
<dbReference type="RefSeq" id="XP_005194076.1">
    <property type="nucleotide sequence ID" value="XM_005194019.3"/>
</dbReference>
<dbReference type="RefSeq" id="XP_010802623.1">
    <property type="nucleotide sequence ID" value="XM_010804321.2"/>
</dbReference>
<dbReference type="RefSeq" id="XP_059741497.1">
    <property type="nucleotide sequence ID" value="XM_059885514.1"/>
</dbReference>
<dbReference type="RefSeq" id="XP_059741498.1">
    <property type="nucleotide sequence ID" value="XM_059885515.1"/>
</dbReference>
<dbReference type="PDB" id="2B4Z">
    <property type="method" value="X-ray"/>
    <property type="resolution" value="1.50 A"/>
    <property type="chains" value="A=2-105"/>
</dbReference>
<dbReference type="PDB" id="2YBB">
    <property type="method" value="EM"/>
    <property type="resolution" value="19.00 A"/>
    <property type="chains" value="Y=2-105"/>
</dbReference>
<dbReference type="PDB" id="3J2T">
    <property type="method" value="EM"/>
    <property type="resolution" value="9.50 A"/>
    <property type="chains" value="H/I/J/K/L/M/N=2-105"/>
</dbReference>
<dbReference type="PDB" id="5JUY">
    <property type="method" value="EM"/>
    <property type="resolution" value="4.10 A"/>
    <property type="chains" value="H/I/J/K/L/M/N=2-105"/>
</dbReference>
<dbReference type="PDB" id="6FF5">
    <property type="method" value="X-ray"/>
    <property type="resolution" value="1.74 A"/>
    <property type="chains" value="A=2-105"/>
</dbReference>
<dbReference type="PDBsum" id="2B4Z"/>
<dbReference type="PDBsum" id="2YBB"/>
<dbReference type="PDBsum" id="3J2T"/>
<dbReference type="PDBsum" id="5JUY"/>
<dbReference type="PDBsum" id="6FF5"/>
<dbReference type="BMRB" id="P62894"/>
<dbReference type="EMDB" id="EMD-5186"/>
<dbReference type="EMDB" id="EMD-8178"/>
<dbReference type="SASBDB" id="P62894"/>
<dbReference type="SMR" id="P62894"/>
<dbReference type="BioGRID" id="167399">
    <property type="interactions" value="1"/>
</dbReference>
<dbReference type="DIP" id="DIP-58978N"/>
<dbReference type="FunCoup" id="P62894">
    <property type="interactions" value="2533"/>
</dbReference>
<dbReference type="IntAct" id="P62894">
    <property type="interactions" value="1"/>
</dbReference>
<dbReference type="STRING" id="9913.ENSBTAP00000007918"/>
<dbReference type="ChEMBL" id="CHEMBL3396942"/>
<dbReference type="CarbonylDB" id="P62894"/>
<dbReference type="iPTMnet" id="P62894"/>
<dbReference type="PaxDb" id="9913-ENSBTAP00000007918"/>
<dbReference type="PeptideAtlas" id="P62894"/>
<dbReference type="ABCD" id="P62894">
    <property type="antibodies" value="3 sequenced antibodies"/>
</dbReference>
<dbReference type="Ensembl" id="ENSBTAT00000007918.3">
    <property type="protein sequence ID" value="ENSBTAP00000007918.2"/>
    <property type="gene ID" value="ENSBTAG00000022613.4"/>
</dbReference>
<dbReference type="Ensembl" id="ENSBTAT00000089406.1">
    <property type="protein sequence ID" value="ENSBTAP00000088565.1"/>
    <property type="gene ID" value="ENSBTAG00000063185.1"/>
</dbReference>
<dbReference type="GeneID" id="510767"/>
<dbReference type="KEGG" id="bta:100847700"/>
<dbReference type="KEGG" id="bta:510767"/>
<dbReference type="CTD" id="54205"/>
<dbReference type="VEuPathDB" id="HostDB:ENSBTAG00000022613"/>
<dbReference type="VEuPathDB" id="HostDB:ENSBTAG00000023823"/>
<dbReference type="eggNOG" id="KOG3453">
    <property type="taxonomic scope" value="Eukaryota"/>
</dbReference>
<dbReference type="GeneTree" id="ENSGT00940000157883"/>
<dbReference type="HOGENOM" id="CLU_060944_3_0_1"/>
<dbReference type="InParanoid" id="P62894"/>
<dbReference type="OMA" id="KARCAQC"/>
<dbReference type="OrthoDB" id="449280at2759"/>
<dbReference type="TreeFam" id="TF300226"/>
<dbReference type="Reactome" id="R-BTA-111457">
    <property type="pathway name" value="Release of apoptotic factors from the mitochondria"/>
</dbReference>
<dbReference type="Reactome" id="R-BTA-111458">
    <property type="pathway name" value="Formation of apoptosome"/>
</dbReference>
<dbReference type="Reactome" id="R-BTA-111459">
    <property type="pathway name" value="Activation of caspases through apoptosome-mediated cleavage"/>
</dbReference>
<dbReference type="Reactome" id="R-BTA-2151201">
    <property type="pathway name" value="Transcriptional activation of mitochondrial biogenesis"/>
</dbReference>
<dbReference type="Reactome" id="R-BTA-3299685">
    <property type="pathway name" value="Detoxification of Reactive Oxygen Species"/>
</dbReference>
<dbReference type="Reactome" id="R-BTA-5620971">
    <property type="pathway name" value="Pyroptosis"/>
</dbReference>
<dbReference type="Reactome" id="R-BTA-5628897">
    <property type="pathway name" value="TP53 Regulates Metabolic Genes"/>
</dbReference>
<dbReference type="Reactome" id="R-BTA-611105">
    <property type="pathway name" value="Respiratory electron transport"/>
</dbReference>
<dbReference type="Reactome" id="R-BTA-9627069">
    <property type="pathway name" value="Regulation of the apoptosome activity"/>
</dbReference>
<dbReference type="Reactome" id="R-BTA-9707564">
    <property type="pathway name" value="Cytoprotection by HMOX1"/>
</dbReference>
<dbReference type="EvolutionaryTrace" id="P62894"/>
<dbReference type="Proteomes" id="UP000009136">
    <property type="component" value="Chromosome 11"/>
</dbReference>
<dbReference type="Proteomes" id="UP000009136">
    <property type="component" value="Chromosome 4"/>
</dbReference>
<dbReference type="Bgee" id="ENSBTAG00000022613">
    <property type="expression patterns" value="Expressed in cardiac ventricle and 105 other cell types or tissues"/>
</dbReference>
<dbReference type="GO" id="GO:0005758">
    <property type="term" value="C:mitochondrial intermembrane space"/>
    <property type="evidence" value="ECO:0000318"/>
    <property type="project" value="GO_Central"/>
</dbReference>
<dbReference type="GO" id="GO:0009055">
    <property type="term" value="F:electron transfer activity"/>
    <property type="evidence" value="ECO:0000318"/>
    <property type="project" value="GO_Central"/>
</dbReference>
<dbReference type="GO" id="GO:0020037">
    <property type="term" value="F:heme binding"/>
    <property type="evidence" value="ECO:0007669"/>
    <property type="project" value="InterPro"/>
</dbReference>
<dbReference type="GO" id="GO:0046872">
    <property type="term" value="F:metal ion binding"/>
    <property type="evidence" value="ECO:0007669"/>
    <property type="project" value="UniProtKB-KW"/>
</dbReference>
<dbReference type="GO" id="GO:0006915">
    <property type="term" value="P:apoptotic process"/>
    <property type="evidence" value="ECO:0007669"/>
    <property type="project" value="UniProtKB-KW"/>
</dbReference>
<dbReference type="GO" id="GO:0006123">
    <property type="term" value="P:mitochondrial electron transport, cytochrome c to oxygen"/>
    <property type="evidence" value="ECO:0000318"/>
    <property type="project" value="GO_Central"/>
</dbReference>
<dbReference type="GO" id="GO:0006122">
    <property type="term" value="P:mitochondrial electron transport, ubiquinol to cytochrome c"/>
    <property type="evidence" value="ECO:0000318"/>
    <property type="project" value="GO_Central"/>
</dbReference>
<dbReference type="FunFam" id="1.10.760.10:FF:000008">
    <property type="entry name" value="Cytochrome c"/>
    <property type="match status" value="1"/>
</dbReference>
<dbReference type="Gene3D" id="1.10.760.10">
    <property type="entry name" value="Cytochrome c-like domain"/>
    <property type="match status" value="1"/>
</dbReference>
<dbReference type="InterPro" id="IPR009056">
    <property type="entry name" value="Cyt_c-like_dom"/>
</dbReference>
<dbReference type="InterPro" id="IPR036909">
    <property type="entry name" value="Cyt_c-like_dom_sf"/>
</dbReference>
<dbReference type="InterPro" id="IPR002327">
    <property type="entry name" value="Cyt_c_1A/1B"/>
</dbReference>
<dbReference type="PANTHER" id="PTHR11961">
    <property type="entry name" value="CYTOCHROME C"/>
    <property type="match status" value="1"/>
</dbReference>
<dbReference type="Pfam" id="PF00034">
    <property type="entry name" value="Cytochrom_C"/>
    <property type="match status" value="1"/>
</dbReference>
<dbReference type="PRINTS" id="PR00604">
    <property type="entry name" value="CYTCHRMECIAB"/>
</dbReference>
<dbReference type="SUPFAM" id="SSF46626">
    <property type="entry name" value="Cytochrome c"/>
    <property type="match status" value="1"/>
</dbReference>
<dbReference type="PROSITE" id="PS51007">
    <property type="entry name" value="CYTC"/>
    <property type="match status" value="1"/>
</dbReference>
<keyword id="KW-0002">3D-structure</keyword>
<keyword id="KW-0007">Acetylation</keyword>
<keyword id="KW-0053">Apoptosis</keyword>
<keyword id="KW-0903">Direct protein sequencing</keyword>
<keyword id="KW-0249">Electron transport</keyword>
<keyword id="KW-0349">Heme</keyword>
<keyword id="KW-0408">Iron</keyword>
<keyword id="KW-0479">Metal-binding</keyword>
<keyword id="KW-0496">Mitochondrion</keyword>
<keyword id="KW-0597">Phosphoprotein</keyword>
<keyword id="KW-1185">Reference proteome</keyword>
<keyword id="KW-0679">Respiratory chain</keyword>
<keyword id="KW-0813">Transport</keyword>
<protein>
    <recommendedName>
        <fullName>Cytochrome c</fullName>
    </recommendedName>
</protein>
<sequence length="105" mass="11704">MGDVEKGKKIFVQKCAQCHTVEKGGKHKTGPNLHGLFGRKTGQAPGFSYTDANKNKGITWGEETLMEYLENPKKYIPGTKMIFAGIKKKGEREDLIAYLKKATNE</sequence>
<name>CYC_BOVIN</name>
<evidence type="ECO:0000250" key="1"/>
<evidence type="ECO:0000250" key="2">
    <source>
        <dbReference type="UniProtKB" id="P62897"/>
    </source>
</evidence>
<evidence type="ECO:0000269" key="3">
    <source>
    </source>
</evidence>
<evidence type="ECO:0000269" key="4">
    <source>
    </source>
</evidence>
<evidence type="ECO:0000269" key="5">
    <source>
    </source>
</evidence>
<evidence type="ECO:0000305" key="6"/>
<evidence type="ECO:0007829" key="7">
    <source>
        <dbReference type="PDB" id="2B4Z"/>
    </source>
</evidence>